<keyword id="KW-0025">Alternative splicing</keyword>
<keyword id="KW-0223">Dioxygenase</keyword>
<keyword id="KW-0408">Iron</keyword>
<keyword id="KW-0479">Metal-binding</keyword>
<keyword id="KW-0560">Oxidoreductase</keyword>
<keyword id="KW-1185">Reference proteome</keyword>
<keyword id="KW-0819">tRNA processing</keyword>
<protein>
    <recommendedName>
        <fullName evidence="6">tRNA wybutosine-synthesizing protein 5</fullName>
        <ecNumber evidence="2">1.14.11.42</ecNumber>
    </recommendedName>
    <alternativeName>
        <fullName>tRNA(Phe) (7-(3-amino-3-carboxypropyl)wyosine(37)-C(2))-hydroxylase</fullName>
    </alternativeName>
</protein>
<sequence>MAEQRLPVPRLRGVSREQFMEHLYPQRKPLVLEGLDLGSCTSKWTVDYLSQVGGTKEVKIHVAAVPQMDFISKNFVYRTLPFNKLVQRAAEETHKEFFISEDEKYYLRSLGEDPRKDVADIRQQFPSLGGDITFPMFFREEQFFSSVFRISSPGLQLWTHYDVMDNFLIQVTGKKRITLFNPRDAQYLYLSGSKSEVLNIDSPDLDKYPLFPKARRYECSLEAGDVLFIPALWFHNVVSEEFGVGVNIFWKHLPSECYDTTDTYGNKDPVAASRAVQILDRALKTLAELPEEYRDFYARQMVLRIQDKAYSKNFE</sequence>
<proteinExistence type="evidence at transcript level"/>
<reference key="1">
    <citation type="journal article" date="2005" name="Science">
        <title>The transcriptional landscape of the mammalian genome.</title>
        <authorList>
            <person name="Carninci P."/>
            <person name="Kasukawa T."/>
            <person name="Katayama S."/>
            <person name="Gough J."/>
            <person name="Frith M.C."/>
            <person name="Maeda N."/>
            <person name="Oyama R."/>
            <person name="Ravasi T."/>
            <person name="Lenhard B."/>
            <person name="Wells C."/>
            <person name="Kodzius R."/>
            <person name="Shimokawa K."/>
            <person name="Bajic V.B."/>
            <person name="Brenner S.E."/>
            <person name="Batalov S."/>
            <person name="Forrest A.R."/>
            <person name="Zavolan M."/>
            <person name="Davis M.J."/>
            <person name="Wilming L.G."/>
            <person name="Aidinis V."/>
            <person name="Allen J.E."/>
            <person name="Ambesi-Impiombato A."/>
            <person name="Apweiler R."/>
            <person name="Aturaliya R.N."/>
            <person name="Bailey T.L."/>
            <person name="Bansal M."/>
            <person name="Baxter L."/>
            <person name="Beisel K.W."/>
            <person name="Bersano T."/>
            <person name="Bono H."/>
            <person name="Chalk A.M."/>
            <person name="Chiu K.P."/>
            <person name="Choudhary V."/>
            <person name="Christoffels A."/>
            <person name="Clutterbuck D.R."/>
            <person name="Crowe M.L."/>
            <person name="Dalla E."/>
            <person name="Dalrymple B.P."/>
            <person name="de Bono B."/>
            <person name="Della Gatta G."/>
            <person name="di Bernardo D."/>
            <person name="Down T."/>
            <person name="Engstrom P."/>
            <person name="Fagiolini M."/>
            <person name="Faulkner G."/>
            <person name="Fletcher C.F."/>
            <person name="Fukushima T."/>
            <person name="Furuno M."/>
            <person name="Futaki S."/>
            <person name="Gariboldi M."/>
            <person name="Georgii-Hemming P."/>
            <person name="Gingeras T.R."/>
            <person name="Gojobori T."/>
            <person name="Green R.E."/>
            <person name="Gustincich S."/>
            <person name="Harbers M."/>
            <person name="Hayashi Y."/>
            <person name="Hensch T.K."/>
            <person name="Hirokawa N."/>
            <person name="Hill D."/>
            <person name="Huminiecki L."/>
            <person name="Iacono M."/>
            <person name="Ikeo K."/>
            <person name="Iwama A."/>
            <person name="Ishikawa T."/>
            <person name="Jakt M."/>
            <person name="Kanapin A."/>
            <person name="Katoh M."/>
            <person name="Kawasawa Y."/>
            <person name="Kelso J."/>
            <person name="Kitamura H."/>
            <person name="Kitano H."/>
            <person name="Kollias G."/>
            <person name="Krishnan S.P."/>
            <person name="Kruger A."/>
            <person name="Kummerfeld S.K."/>
            <person name="Kurochkin I.V."/>
            <person name="Lareau L.F."/>
            <person name="Lazarevic D."/>
            <person name="Lipovich L."/>
            <person name="Liu J."/>
            <person name="Liuni S."/>
            <person name="McWilliam S."/>
            <person name="Madan Babu M."/>
            <person name="Madera M."/>
            <person name="Marchionni L."/>
            <person name="Matsuda H."/>
            <person name="Matsuzawa S."/>
            <person name="Miki H."/>
            <person name="Mignone F."/>
            <person name="Miyake S."/>
            <person name="Morris K."/>
            <person name="Mottagui-Tabar S."/>
            <person name="Mulder N."/>
            <person name="Nakano N."/>
            <person name="Nakauchi H."/>
            <person name="Ng P."/>
            <person name="Nilsson R."/>
            <person name="Nishiguchi S."/>
            <person name="Nishikawa S."/>
            <person name="Nori F."/>
            <person name="Ohara O."/>
            <person name="Okazaki Y."/>
            <person name="Orlando V."/>
            <person name="Pang K.C."/>
            <person name="Pavan W.J."/>
            <person name="Pavesi G."/>
            <person name="Pesole G."/>
            <person name="Petrovsky N."/>
            <person name="Piazza S."/>
            <person name="Reed J."/>
            <person name="Reid J.F."/>
            <person name="Ring B.Z."/>
            <person name="Ringwald M."/>
            <person name="Rost B."/>
            <person name="Ruan Y."/>
            <person name="Salzberg S.L."/>
            <person name="Sandelin A."/>
            <person name="Schneider C."/>
            <person name="Schoenbach C."/>
            <person name="Sekiguchi K."/>
            <person name="Semple C.A."/>
            <person name="Seno S."/>
            <person name="Sessa L."/>
            <person name="Sheng Y."/>
            <person name="Shibata Y."/>
            <person name="Shimada H."/>
            <person name="Shimada K."/>
            <person name="Silva D."/>
            <person name="Sinclair B."/>
            <person name="Sperling S."/>
            <person name="Stupka E."/>
            <person name="Sugiura K."/>
            <person name="Sultana R."/>
            <person name="Takenaka Y."/>
            <person name="Taki K."/>
            <person name="Tammoja K."/>
            <person name="Tan S.L."/>
            <person name="Tang S."/>
            <person name="Taylor M.S."/>
            <person name="Tegner J."/>
            <person name="Teichmann S.A."/>
            <person name="Ueda H.R."/>
            <person name="van Nimwegen E."/>
            <person name="Verardo R."/>
            <person name="Wei C.L."/>
            <person name="Yagi K."/>
            <person name="Yamanishi H."/>
            <person name="Zabarovsky E."/>
            <person name="Zhu S."/>
            <person name="Zimmer A."/>
            <person name="Hide W."/>
            <person name="Bult C."/>
            <person name="Grimmond S.M."/>
            <person name="Teasdale R.D."/>
            <person name="Liu E.T."/>
            <person name="Brusic V."/>
            <person name="Quackenbush J."/>
            <person name="Wahlestedt C."/>
            <person name="Mattick J.S."/>
            <person name="Hume D.A."/>
            <person name="Kai C."/>
            <person name="Sasaki D."/>
            <person name="Tomaru Y."/>
            <person name="Fukuda S."/>
            <person name="Kanamori-Katayama M."/>
            <person name="Suzuki M."/>
            <person name="Aoki J."/>
            <person name="Arakawa T."/>
            <person name="Iida J."/>
            <person name="Imamura K."/>
            <person name="Itoh M."/>
            <person name="Kato T."/>
            <person name="Kawaji H."/>
            <person name="Kawagashira N."/>
            <person name="Kawashima T."/>
            <person name="Kojima M."/>
            <person name="Kondo S."/>
            <person name="Konno H."/>
            <person name="Nakano K."/>
            <person name="Ninomiya N."/>
            <person name="Nishio T."/>
            <person name="Okada M."/>
            <person name="Plessy C."/>
            <person name="Shibata K."/>
            <person name="Shiraki T."/>
            <person name="Suzuki S."/>
            <person name="Tagami M."/>
            <person name="Waki K."/>
            <person name="Watahiki A."/>
            <person name="Okamura-Oho Y."/>
            <person name="Suzuki H."/>
            <person name="Kawai J."/>
            <person name="Hayashizaki Y."/>
        </authorList>
    </citation>
    <scope>NUCLEOTIDE SEQUENCE [LARGE SCALE MRNA] (ISOFORM 2)</scope>
    <source>
        <strain>C57BL/6J</strain>
        <tissue>Egg</tissue>
    </source>
</reference>
<reference key="2">
    <citation type="journal article" date="2004" name="Genome Res.">
        <title>The status, quality, and expansion of the NIH full-length cDNA project: the Mammalian Gene Collection (MGC).</title>
        <authorList>
            <consortium name="The MGC Project Team"/>
        </authorList>
    </citation>
    <scope>NUCLEOTIDE SEQUENCE [LARGE SCALE MRNA] (ISOFORM 1)</scope>
    <scope>NUCLEOTIDE SEQUENCE [LARGE SCALE MRNA] OF 10-315 (ISOFORM 2)</scope>
    <source>
        <tissue>Brain</tissue>
        <tissue>Thyroid</tissue>
    </source>
</reference>
<name>TYW5_MOUSE</name>
<evidence type="ECO:0000250" key="1"/>
<evidence type="ECO:0000250" key="2">
    <source>
        <dbReference type="UniProtKB" id="A2RUC4"/>
    </source>
</evidence>
<evidence type="ECO:0000255" key="3">
    <source>
        <dbReference type="PROSITE-ProRule" id="PRU00538"/>
    </source>
</evidence>
<evidence type="ECO:0000303" key="4">
    <source>
    </source>
</evidence>
<evidence type="ECO:0000303" key="5">
    <source>
    </source>
</evidence>
<evidence type="ECO:0000305" key="6"/>
<organism>
    <name type="scientific">Mus musculus</name>
    <name type="common">Mouse</name>
    <dbReference type="NCBI Taxonomy" id="10090"/>
    <lineage>
        <taxon>Eukaryota</taxon>
        <taxon>Metazoa</taxon>
        <taxon>Chordata</taxon>
        <taxon>Craniata</taxon>
        <taxon>Vertebrata</taxon>
        <taxon>Euteleostomi</taxon>
        <taxon>Mammalia</taxon>
        <taxon>Eutheria</taxon>
        <taxon>Euarchontoglires</taxon>
        <taxon>Glires</taxon>
        <taxon>Rodentia</taxon>
        <taxon>Myomorpha</taxon>
        <taxon>Muroidea</taxon>
        <taxon>Muridae</taxon>
        <taxon>Murinae</taxon>
        <taxon>Mus</taxon>
        <taxon>Mus</taxon>
    </lineage>
</organism>
<comment type="function">
    <text evidence="2">tRNA hydroxylase that acts as a component of the wybutosine biosynthesis pathway. Wybutosine is a hyper modified guanosine with a tricyclic base found at the 3'-position adjacent to the anticodon of eukaryotic phenylalanine tRNA. Catalyzes the hydroxylation of 7-(a-amino-a-carboxypropyl)wyosine (yW-72) into undermodified hydroxywybutosine (OHyW*). OHyW* being further transformed into hydroxywybutosine (OHyW) by LCMT2/TYW4. OHyW is a derivative of wybutosine found in higher eukaryotes.</text>
</comment>
<comment type="catalytic activity">
    <reaction evidence="2">
        <text>7-[(3S)-3-amino-3-carboxypropyl]wyosine(37) in tRNA(Phe) + 2-oxoglutarate + O2 = 7-(2-hydroxy-3-amino-3-carboxypropyl)wyosine(37) in tRNA(Phe) + succinate + CO2</text>
        <dbReference type="Rhea" id="RHEA:37899"/>
        <dbReference type="Rhea" id="RHEA-COMP:10379"/>
        <dbReference type="Rhea" id="RHEA-COMP:11848"/>
        <dbReference type="ChEBI" id="CHEBI:15379"/>
        <dbReference type="ChEBI" id="CHEBI:16526"/>
        <dbReference type="ChEBI" id="CHEBI:16810"/>
        <dbReference type="ChEBI" id="CHEBI:30031"/>
        <dbReference type="ChEBI" id="CHEBI:73543"/>
        <dbReference type="ChEBI" id="CHEBI:73603"/>
        <dbReference type="EC" id="1.14.11.42"/>
    </reaction>
    <physiologicalReaction direction="left-to-right" evidence="2">
        <dbReference type="Rhea" id="RHEA:37900"/>
    </physiologicalReaction>
</comment>
<comment type="cofactor">
    <cofactor evidence="2">
        <name>Fe(2+)</name>
        <dbReference type="ChEBI" id="CHEBI:29033"/>
    </cofactor>
    <text evidence="2">Binds 1 Fe(2+) ion per subunit.</text>
</comment>
<comment type="pathway">
    <text evidence="2">tRNA modification; wybutosine-tRNA(Phe) biosynthesis.</text>
</comment>
<comment type="subunit">
    <text evidence="2">Homodimer.</text>
</comment>
<comment type="alternative products">
    <event type="alternative splicing"/>
    <isoform>
        <id>A2RSX7-1</id>
        <name>1</name>
        <sequence type="displayed"/>
    </isoform>
    <isoform>
        <id>A2RSX7-2</id>
        <name>2</name>
        <sequence type="described" ref="VSP_029107 VSP_029108"/>
    </isoform>
</comment>
<comment type="similarity">
    <text evidence="6">Belongs to the TYW5 family.</text>
</comment>
<feature type="chain" id="PRO_0000309275" description="tRNA wybutosine-synthesizing protein 5">
    <location>
        <begin position="1"/>
        <end position="315"/>
    </location>
</feature>
<feature type="domain" description="JmjC" evidence="3">
    <location>
        <begin position="102"/>
        <end position="267"/>
    </location>
</feature>
<feature type="binding site" evidence="1">
    <location>
        <position position="106"/>
    </location>
    <ligand>
        <name>2-oxoglutarate</name>
        <dbReference type="ChEBI" id="CHEBI:16810"/>
    </ligand>
</feature>
<feature type="binding site" evidence="3">
    <location>
        <position position="160"/>
    </location>
    <ligand>
        <name>Fe cation</name>
        <dbReference type="ChEBI" id="CHEBI:24875"/>
        <note>catalytic</note>
    </ligand>
</feature>
<feature type="binding site" evidence="3">
    <location>
        <position position="162"/>
    </location>
    <ligand>
        <name>Fe cation</name>
        <dbReference type="ChEBI" id="CHEBI:24875"/>
        <note>catalytic</note>
    </ligand>
</feature>
<feature type="binding site" evidence="1">
    <location>
        <position position="166"/>
    </location>
    <ligand>
        <name>2-oxoglutarate</name>
        <dbReference type="ChEBI" id="CHEBI:16810"/>
    </ligand>
</feature>
<feature type="binding site" evidence="1">
    <location>
        <position position="175"/>
    </location>
    <ligand>
        <name>2-oxoglutarate</name>
        <dbReference type="ChEBI" id="CHEBI:16810"/>
    </ligand>
</feature>
<feature type="binding site" evidence="3">
    <location>
        <position position="235"/>
    </location>
    <ligand>
        <name>Fe cation</name>
        <dbReference type="ChEBI" id="CHEBI:24875"/>
        <note>catalytic</note>
    </ligand>
</feature>
<feature type="splice variant" id="VSP_029107" description="In isoform 2." evidence="4 5">
    <original>SKNFVYRTLPFNKLVQRAAEETHKEFFISEDEKYYLRSLGEDPRKDVADI</original>
    <variation>KLYLLTSWSREQPKKHIKNSSFQRMRNTTYGHLEKTQGRMLQTSDSSSHH</variation>
    <location>
        <begin position="72"/>
        <end position="121"/>
    </location>
</feature>
<feature type="splice variant" id="VSP_029108" description="In isoform 2." evidence="4 5">
    <location>
        <begin position="122"/>
        <end position="315"/>
    </location>
</feature>
<feature type="sequence conflict" description="In Ref. 2; AAI32290." evidence="6" ref="2">
    <original>R</original>
    <variation>H</variation>
    <location>
        <position position="5"/>
    </location>
</feature>
<accession>A2RSX7</accession>
<accession>Q3UT82</accession>
<accession>Q4KL17</accession>
<dbReference type="EC" id="1.14.11.42" evidence="2"/>
<dbReference type="EMBL" id="AK139666">
    <property type="protein sequence ID" value="BAE24098.1"/>
    <property type="molecule type" value="mRNA"/>
</dbReference>
<dbReference type="EMBL" id="BC099495">
    <property type="status" value="NOT_ANNOTATED_CDS"/>
    <property type="molecule type" value="mRNA"/>
</dbReference>
<dbReference type="EMBL" id="BC132289">
    <property type="protein sequence ID" value="AAI32290.1"/>
    <property type="molecule type" value="mRNA"/>
</dbReference>
<dbReference type="CCDS" id="CCDS14966.2">
    <molecule id="A2RSX7-1"/>
</dbReference>
<dbReference type="RefSeq" id="NP_001032831.2">
    <molecule id="A2RSX7-1"/>
    <property type="nucleotide sequence ID" value="NM_001037742.2"/>
</dbReference>
<dbReference type="SMR" id="A2RSX7"/>
<dbReference type="FunCoup" id="A2RSX7">
    <property type="interactions" value="95"/>
</dbReference>
<dbReference type="STRING" id="10090.ENSMUSP00000125427"/>
<dbReference type="PhosphoSitePlus" id="A2RSX7"/>
<dbReference type="PaxDb" id="10090-ENSMUSP00000125427"/>
<dbReference type="PeptideAtlas" id="A2RSX7"/>
<dbReference type="ProteomicsDB" id="298159">
    <molecule id="A2RSX7-1"/>
</dbReference>
<dbReference type="ProteomicsDB" id="298160">
    <molecule id="A2RSX7-2"/>
</dbReference>
<dbReference type="Pumba" id="A2RSX7"/>
<dbReference type="Antibodypedia" id="34079">
    <property type="antibodies" value="82 antibodies from 18 providers"/>
</dbReference>
<dbReference type="Ensembl" id="ENSMUST00000079998.13">
    <molecule id="A2RSX7-2"/>
    <property type="protein sequence ID" value="ENSMUSP00000078912.7"/>
    <property type="gene ID" value="ENSMUSG00000048495.17"/>
</dbReference>
<dbReference type="Ensembl" id="ENSMUST00000162686.8">
    <molecule id="A2RSX7-1"/>
    <property type="protein sequence ID" value="ENSMUSP00000125427.2"/>
    <property type="gene ID" value="ENSMUSG00000048495.17"/>
</dbReference>
<dbReference type="GeneID" id="68736"/>
<dbReference type="KEGG" id="mmu:68736"/>
<dbReference type="UCSC" id="uc007baz.2">
    <molecule id="A2RSX7-1"/>
    <property type="organism name" value="mouse"/>
</dbReference>
<dbReference type="UCSC" id="uc007bbb.2">
    <molecule id="A2RSX7-2"/>
    <property type="organism name" value="mouse"/>
</dbReference>
<dbReference type="AGR" id="MGI:1915986"/>
<dbReference type="CTD" id="129450"/>
<dbReference type="MGI" id="MGI:1915986">
    <property type="gene designation" value="Tyw5"/>
</dbReference>
<dbReference type="VEuPathDB" id="HostDB:ENSMUSG00000048495"/>
<dbReference type="eggNOG" id="KOG2132">
    <property type="taxonomic scope" value="Eukaryota"/>
</dbReference>
<dbReference type="GeneTree" id="ENSGT00940000158493"/>
<dbReference type="HOGENOM" id="CLU_016785_4_0_1"/>
<dbReference type="InParanoid" id="A2RSX7"/>
<dbReference type="OMA" id="LYDDRPV"/>
<dbReference type="OrthoDB" id="263283at2759"/>
<dbReference type="PhylomeDB" id="A2RSX7"/>
<dbReference type="TreeFam" id="TF332364"/>
<dbReference type="UniPathway" id="UPA00375"/>
<dbReference type="BioGRID-ORCS" id="68736">
    <property type="hits" value="2 hits in 79 CRISPR screens"/>
</dbReference>
<dbReference type="ChiTaRS" id="Tyw5">
    <property type="organism name" value="mouse"/>
</dbReference>
<dbReference type="PRO" id="PR:A2RSX7"/>
<dbReference type="Proteomes" id="UP000000589">
    <property type="component" value="Chromosome 1"/>
</dbReference>
<dbReference type="RNAct" id="A2RSX7">
    <property type="molecule type" value="protein"/>
</dbReference>
<dbReference type="Bgee" id="ENSMUSG00000048495">
    <property type="expression patterns" value="Expressed in spermatocyte and 241 other cell types or tissues"/>
</dbReference>
<dbReference type="ExpressionAtlas" id="A2RSX7">
    <property type="expression patterns" value="baseline and differential"/>
</dbReference>
<dbReference type="GO" id="GO:0005506">
    <property type="term" value="F:iron ion binding"/>
    <property type="evidence" value="ECO:0000250"/>
    <property type="project" value="UniProtKB"/>
</dbReference>
<dbReference type="GO" id="GO:0042803">
    <property type="term" value="F:protein homodimerization activity"/>
    <property type="evidence" value="ECO:0000250"/>
    <property type="project" value="UniProtKB"/>
</dbReference>
<dbReference type="GO" id="GO:0000049">
    <property type="term" value="F:tRNA binding"/>
    <property type="evidence" value="ECO:0000250"/>
    <property type="project" value="UniProtKB"/>
</dbReference>
<dbReference type="GO" id="GO:0102524">
    <property type="term" value="F:tRNA(Phe) (7-(3-amino-3-carboxypropyl)wyosine37-C2)-hydroxylase activity"/>
    <property type="evidence" value="ECO:0000250"/>
    <property type="project" value="UniProtKB"/>
</dbReference>
<dbReference type="GO" id="GO:0031591">
    <property type="term" value="P:wybutosine biosynthetic process"/>
    <property type="evidence" value="ECO:0000250"/>
    <property type="project" value="UniProtKB"/>
</dbReference>
<dbReference type="FunFam" id="2.60.120.650:FF:000022">
    <property type="entry name" value="tRNA wybutosine-synthesizing protein 5"/>
    <property type="match status" value="1"/>
</dbReference>
<dbReference type="Gene3D" id="6.10.140.1470">
    <property type="match status" value="1"/>
</dbReference>
<dbReference type="Gene3D" id="2.60.120.650">
    <property type="entry name" value="Cupin"/>
    <property type="match status" value="1"/>
</dbReference>
<dbReference type="InterPro" id="IPR041667">
    <property type="entry name" value="Cupin_8"/>
</dbReference>
<dbReference type="InterPro" id="IPR003347">
    <property type="entry name" value="JmjC_dom"/>
</dbReference>
<dbReference type="PANTHER" id="PTHR12461">
    <property type="entry name" value="HYPOXIA-INDUCIBLE FACTOR 1 ALPHA INHIBITOR-RELATED"/>
    <property type="match status" value="1"/>
</dbReference>
<dbReference type="PANTHER" id="PTHR12461:SF104">
    <property type="entry name" value="TRNA WYBUTOSINE-SYNTHESIZING PROTEIN 5"/>
    <property type="match status" value="1"/>
</dbReference>
<dbReference type="Pfam" id="PF13621">
    <property type="entry name" value="Cupin_8"/>
    <property type="match status" value="1"/>
</dbReference>
<dbReference type="SMART" id="SM00558">
    <property type="entry name" value="JmjC"/>
    <property type="match status" value="1"/>
</dbReference>
<dbReference type="SUPFAM" id="SSF51197">
    <property type="entry name" value="Clavaminate synthase-like"/>
    <property type="match status" value="1"/>
</dbReference>
<dbReference type="PROSITE" id="PS51184">
    <property type="entry name" value="JMJC"/>
    <property type="match status" value="1"/>
</dbReference>
<gene>
    <name type="primary">Tyw5</name>
</gene>